<keyword id="KW-1185">Reference proteome</keyword>
<organismHost>
    <name type="scientific">Homo sapiens</name>
    <name type="common">Human</name>
    <dbReference type="NCBI Taxonomy" id="9606"/>
</organismHost>
<proteinExistence type="inferred from homology"/>
<evidence type="ECO:0000305" key="1"/>
<protein>
    <recommendedName>
        <fullName>Uncharacterized protein 57</fullName>
    </recommendedName>
    <alternativeName>
        <fullName>Uncharacterized ORF57 protein</fullName>
    </alternativeName>
</protein>
<reference key="1">
    <citation type="journal article" date="1986" name="J. Gen. Virol.">
        <title>The complete DNA sequence of varicella-zoster virus.</title>
        <authorList>
            <person name="Davison A.J."/>
            <person name="Scott J.E."/>
        </authorList>
    </citation>
    <scope>NUCLEOTIDE SEQUENCE [LARGE SCALE GENOMIC DNA]</scope>
</reference>
<comment type="similarity">
    <text evidence="1">Belongs to the varicellovirus ORF57 protein family.</text>
</comment>
<name>ORF57_VZVD</name>
<accession>P09305</accession>
<dbReference type="EMBL" id="X04370">
    <property type="protein sequence ID" value="CAA27940.1"/>
    <property type="molecule type" value="Genomic_DNA"/>
</dbReference>
<dbReference type="PIR" id="E27215">
    <property type="entry name" value="WZBE57"/>
</dbReference>
<dbReference type="Proteomes" id="UP000002602">
    <property type="component" value="Genome"/>
</dbReference>
<gene>
    <name type="ORF">ORF57</name>
</gene>
<organism>
    <name type="scientific">Varicella-zoster virus (strain Dumas)</name>
    <name type="common">HHV-3</name>
    <name type="synonym">Human herpesvirus 3</name>
    <dbReference type="NCBI Taxonomy" id="10338"/>
    <lineage>
        <taxon>Viruses</taxon>
        <taxon>Duplodnaviria</taxon>
        <taxon>Heunggongvirae</taxon>
        <taxon>Peploviricota</taxon>
        <taxon>Herviviricetes</taxon>
        <taxon>Herpesvirales</taxon>
        <taxon>Orthoherpesviridae</taxon>
        <taxon>Alphaherpesvirinae</taxon>
        <taxon>Varicellovirus</taxon>
        <taxon>Varicellovirus humanalpha3</taxon>
        <taxon>Human herpesvirus 3</taxon>
    </lineage>
</organism>
<sequence>MDVRERNVFGNASVATPGEHQKFVRELILSGHNNVVLQTYTGKWSDCRKHGKSVMYNTGEARHPTCKAHQR</sequence>
<feature type="chain" id="PRO_0000116174" description="Uncharacterized protein 57">
    <location>
        <begin position="1"/>
        <end position="71"/>
    </location>
</feature>